<sequence>MPKSKVRKKNDFTVSAVSRTPVKVKVGPSSVWFVALFIGLMLIGLVWLMVFQLAAVGSQAPTALNWMAQLGPWNYAIAFAFMITGLLLTMRWH</sequence>
<name>CRGA_MYCA1</name>
<comment type="function">
    <text evidence="1">Involved in cell division.</text>
</comment>
<comment type="subcellular location">
    <subcellularLocation>
        <location evidence="1">Cell membrane</location>
        <topology evidence="1">Multi-pass membrane protein</topology>
    </subcellularLocation>
</comment>
<comment type="similarity">
    <text evidence="1">Belongs to the CrgA family.</text>
</comment>
<feature type="chain" id="PRO_1000051702" description="Cell division protein CrgA">
    <location>
        <begin position="1"/>
        <end position="93"/>
    </location>
</feature>
<feature type="transmembrane region" description="Helical" evidence="1">
    <location>
        <begin position="31"/>
        <end position="51"/>
    </location>
</feature>
<feature type="transmembrane region" description="Helical" evidence="1">
    <location>
        <begin position="70"/>
        <end position="90"/>
    </location>
</feature>
<dbReference type="EMBL" id="CP000479">
    <property type="protein sequence ID" value="ABK67171.1"/>
    <property type="molecule type" value="Genomic_DNA"/>
</dbReference>
<dbReference type="RefSeq" id="WP_003872098.1">
    <property type="nucleotide sequence ID" value="NC_008595.1"/>
</dbReference>
<dbReference type="SMR" id="A0Q8S8"/>
<dbReference type="GeneID" id="77299329"/>
<dbReference type="KEGG" id="mav:MAV_0015"/>
<dbReference type="HOGENOM" id="CLU_149126_2_0_11"/>
<dbReference type="Proteomes" id="UP000001574">
    <property type="component" value="Chromosome"/>
</dbReference>
<dbReference type="GO" id="GO:0005886">
    <property type="term" value="C:plasma membrane"/>
    <property type="evidence" value="ECO:0007669"/>
    <property type="project" value="UniProtKB-SubCell"/>
</dbReference>
<dbReference type="GO" id="GO:0051301">
    <property type="term" value="P:cell division"/>
    <property type="evidence" value="ECO:0007669"/>
    <property type="project" value="UniProtKB-UniRule"/>
</dbReference>
<dbReference type="HAMAP" id="MF_00631">
    <property type="entry name" value="CrgA"/>
    <property type="match status" value="1"/>
</dbReference>
<dbReference type="InterPro" id="IPR009619">
    <property type="entry name" value="CrgA"/>
</dbReference>
<dbReference type="NCBIfam" id="NF001194">
    <property type="entry name" value="PRK00159.1"/>
    <property type="match status" value="1"/>
</dbReference>
<dbReference type="Pfam" id="PF06781">
    <property type="entry name" value="CrgA"/>
    <property type="match status" value="1"/>
</dbReference>
<protein>
    <recommendedName>
        <fullName evidence="1">Cell division protein CrgA</fullName>
    </recommendedName>
</protein>
<reference key="1">
    <citation type="submission" date="2006-10" db="EMBL/GenBank/DDBJ databases">
        <authorList>
            <person name="Fleischmann R.D."/>
            <person name="Dodson R.J."/>
            <person name="Haft D.H."/>
            <person name="Merkel J.S."/>
            <person name="Nelson W.C."/>
            <person name="Fraser C.M."/>
        </authorList>
    </citation>
    <scope>NUCLEOTIDE SEQUENCE [LARGE SCALE GENOMIC DNA]</scope>
    <source>
        <strain>104</strain>
    </source>
</reference>
<keyword id="KW-0131">Cell cycle</keyword>
<keyword id="KW-0132">Cell division</keyword>
<keyword id="KW-1003">Cell membrane</keyword>
<keyword id="KW-0472">Membrane</keyword>
<keyword id="KW-0812">Transmembrane</keyword>
<keyword id="KW-1133">Transmembrane helix</keyword>
<gene>
    <name evidence="1" type="primary">crgA</name>
    <name type="ordered locus">MAV_0015</name>
</gene>
<organism>
    <name type="scientific">Mycobacterium avium (strain 104)</name>
    <dbReference type="NCBI Taxonomy" id="243243"/>
    <lineage>
        <taxon>Bacteria</taxon>
        <taxon>Bacillati</taxon>
        <taxon>Actinomycetota</taxon>
        <taxon>Actinomycetes</taxon>
        <taxon>Mycobacteriales</taxon>
        <taxon>Mycobacteriaceae</taxon>
        <taxon>Mycobacterium</taxon>
        <taxon>Mycobacterium avium complex (MAC)</taxon>
    </lineage>
</organism>
<accession>A0Q8S8</accession>
<proteinExistence type="inferred from homology"/>
<evidence type="ECO:0000255" key="1">
    <source>
        <dbReference type="HAMAP-Rule" id="MF_00631"/>
    </source>
</evidence>